<name>HSLV_VIBA3</name>
<dbReference type="EC" id="3.4.25.2" evidence="1"/>
<dbReference type="EMBL" id="FM954972">
    <property type="protein sequence ID" value="CAV20198.1"/>
    <property type="molecule type" value="Genomic_DNA"/>
</dbReference>
<dbReference type="SMR" id="B7VLM6"/>
<dbReference type="STRING" id="575788.VS_2901"/>
<dbReference type="MEROPS" id="T01.006"/>
<dbReference type="KEGG" id="vsp:VS_2901"/>
<dbReference type="eggNOG" id="COG5405">
    <property type="taxonomic scope" value="Bacteria"/>
</dbReference>
<dbReference type="HOGENOM" id="CLU_093872_1_0_6"/>
<dbReference type="Proteomes" id="UP000009100">
    <property type="component" value="Chromosome 1"/>
</dbReference>
<dbReference type="GO" id="GO:0009376">
    <property type="term" value="C:HslUV protease complex"/>
    <property type="evidence" value="ECO:0007669"/>
    <property type="project" value="UniProtKB-UniRule"/>
</dbReference>
<dbReference type="GO" id="GO:0005839">
    <property type="term" value="C:proteasome core complex"/>
    <property type="evidence" value="ECO:0007669"/>
    <property type="project" value="InterPro"/>
</dbReference>
<dbReference type="GO" id="GO:0046872">
    <property type="term" value="F:metal ion binding"/>
    <property type="evidence" value="ECO:0007669"/>
    <property type="project" value="UniProtKB-KW"/>
</dbReference>
<dbReference type="GO" id="GO:0004298">
    <property type="term" value="F:threonine-type endopeptidase activity"/>
    <property type="evidence" value="ECO:0007669"/>
    <property type="project" value="UniProtKB-KW"/>
</dbReference>
<dbReference type="GO" id="GO:0051603">
    <property type="term" value="P:proteolysis involved in protein catabolic process"/>
    <property type="evidence" value="ECO:0007669"/>
    <property type="project" value="InterPro"/>
</dbReference>
<dbReference type="CDD" id="cd01913">
    <property type="entry name" value="protease_HslV"/>
    <property type="match status" value="1"/>
</dbReference>
<dbReference type="FunFam" id="3.60.20.10:FF:000002">
    <property type="entry name" value="ATP-dependent protease subunit HslV"/>
    <property type="match status" value="1"/>
</dbReference>
<dbReference type="Gene3D" id="3.60.20.10">
    <property type="entry name" value="Glutamine Phosphoribosylpyrophosphate, subunit 1, domain 1"/>
    <property type="match status" value="1"/>
</dbReference>
<dbReference type="HAMAP" id="MF_00248">
    <property type="entry name" value="HslV"/>
    <property type="match status" value="1"/>
</dbReference>
<dbReference type="InterPro" id="IPR022281">
    <property type="entry name" value="ATP-dep_Prtase_HsIV_su"/>
</dbReference>
<dbReference type="InterPro" id="IPR029055">
    <property type="entry name" value="Ntn_hydrolases_N"/>
</dbReference>
<dbReference type="InterPro" id="IPR001353">
    <property type="entry name" value="Proteasome_sua/b"/>
</dbReference>
<dbReference type="InterPro" id="IPR023333">
    <property type="entry name" value="Proteasome_suB-type"/>
</dbReference>
<dbReference type="NCBIfam" id="TIGR03692">
    <property type="entry name" value="ATP_dep_HslV"/>
    <property type="match status" value="1"/>
</dbReference>
<dbReference type="NCBIfam" id="NF003964">
    <property type="entry name" value="PRK05456.1"/>
    <property type="match status" value="1"/>
</dbReference>
<dbReference type="PANTHER" id="PTHR32194:SF0">
    <property type="entry name" value="ATP-DEPENDENT PROTEASE SUBUNIT HSLV"/>
    <property type="match status" value="1"/>
</dbReference>
<dbReference type="PANTHER" id="PTHR32194">
    <property type="entry name" value="METALLOPROTEASE TLDD"/>
    <property type="match status" value="1"/>
</dbReference>
<dbReference type="Pfam" id="PF00227">
    <property type="entry name" value="Proteasome"/>
    <property type="match status" value="1"/>
</dbReference>
<dbReference type="PIRSF" id="PIRSF039093">
    <property type="entry name" value="HslV"/>
    <property type="match status" value="1"/>
</dbReference>
<dbReference type="SUPFAM" id="SSF56235">
    <property type="entry name" value="N-terminal nucleophile aminohydrolases (Ntn hydrolases)"/>
    <property type="match status" value="1"/>
</dbReference>
<dbReference type="PROSITE" id="PS51476">
    <property type="entry name" value="PROTEASOME_BETA_2"/>
    <property type="match status" value="1"/>
</dbReference>
<gene>
    <name evidence="1" type="primary">hslV</name>
    <name type="ordered locus">VS_2901</name>
</gene>
<keyword id="KW-0021">Allosteric enzyme</keyword>
<keyword id="KW-0963">Cytoplasm</keyword>
<keyword id="KW-0378">Hydrolase</keyword>
<keyword id="KW-0479">Metal-binding</keyword>
<keyword id="KW-0645">Protease</keyword>
<keyword id="KW-0915">Sodium</keyword>
<keyword id="KW-0888">Threonine protease</keyword>
<accession>B7VLM6</accession>
<reference key="1">
    <citation type="submission" date="2009-02" db="EMBL/GenBank/DDBJ databases">
        <title>Vibrio splendidus str. LGP32 complete genome.</title>
        <authorList>
            <person name="Mazel D."/>
            <person name="Le Roux F."/>
        </authorList>
    </citation>
    <scope>NUCLEOTIDE SEQUENCE [LARGE SCALE GENOMIC DNA]</scope>
    <source>
        <strain>LGP32</strain>
    </source>
</reference>
<proteinExistence type="inferred from homology"/>
<organism>
    <name type="scientific">Vibrio atlanticus (strain LGP32)</name>
    <name type="common">Vibrio splendidus (strain Mel32)</name>
    <dbReference type="NCBI Taxonomy" id="575788"/>
    <lineage>
        <taxon>Bacteria</taxon>
        <taxon>Pseudomonadati</taxon>
        <taxon>Pseudomonadota</taxon>
        <taxon>Gammaproteobacteria</taxon>
        <taxon>Vibrionales</taxon>
        <taxon>Vibrionaceae</taxon>
        <taxon>Vibrio</taxon>
    </lineage>
</organism>
<feature type="chain" id="PRO_1000125421" description="ATP-dependent protease subunit HslV">
    <location>
        <begin position="1"/>
        <end position="182"/>
    </location>
</feature>
<feature type="active site" evidence="1">
    <location>
        <position position="2"/>
    </location>
</feature>
<feature type="binding site" evidence="1">
    <location>
        <position position="157"/>
    </location>
    <ligand>
        <name>Na(+)</name>
        <dbReference type="ChEBI" id="CHEBI:29101"/>
    </ligand>
</feature>
<feature type="binding site" evidence="1">
    <location>
        <position position="160"/>
    </location>
    <ligand>
        <name>Na(+)</name>
        <dbReference type="ChEBI" id="CHEBI:29101"/>
    </ligand>
</feature>
<feature type="binding site" evidence="1">
    <location>
        <position position="163"/>
    </location>
    <ligand>
        <name>Na(+)</name>
        <dbReference type="ChEBI" id="CHEBI:29101"/>
    </ligand>
</feature>
<evidence type="ECO:0000255" key="1">
    <source>
        <dbReference type="HAMAP-Rule" id="MF_00248"/>
    </source>
</evidence>
<comment type="function">
    <text evidence="1">Protease subunit of a proteasome-like degradation complex believed to be a general protein degrading machinery.</text>
</comment>
<comment type="catalytic activity">
    <reaction evidence="1">
        <text>ATP-dependent cleavage of peptide bonds with broad specificity.</text>
        <dbReference type="EC" id="3.4.25.2"/>
    </reaction>
</comment>
<comment type="activity regulation">
    <text evidence="1">Allosterically activated by HslU binding.</text>
</comment>
<comment type="subunit">
    <text evidence="1">A double ring-shaped homohexamer of HslV is capped on each side by a ring-shaped HslU homohexamer. The assembly of the HslU/HslV complex is dependent on binding of ATP.</text>
</comment>
<comment type="subcellular location">
    <subcellularLocation>
        <location evidence="1">Cytoplasm</location>
    </subcellularLocation>
</comment>
<comment type="similarity">
    <text evidence="1">Belongs to the peptidase T1B family. HslV subfamily.</text>
</comment>
<sequence>MTTIVSVRRNNKVVIAGDGQVSLGNTVMKGNARKVRRLYNNKVLAGFAGGTADAFTLFEKFESKLQMHQGHLTKAAVELAKDWRSDRALRKLEALLAVADETASLIITGNGDVVQPENDLIAIGSGGNFAQAAATALLENTDLDAREIAEKSLNIAGDICVFTNHHHTIEELESTVELPKPE</sequence>
<protein>
    <recommendedName>
        <fullName evidence="1">ATP-dependent protease subunit HslV</fullName>
        <ecNumber evidence="1">3.4.25.2</ecNumber>
    </recommendedName>
</protein>